<feature type="chain" id="PRO_1000056346" description="Beta-ketoacyl-[acyl-carrier-protein] synthase III">
    <location>
        <begin position="1"/>
        <end position="328"/>
    </location>
</feature>
<feature type="region of interest" description="ACP-binding" evidence="1">
    <location>
        <begin position="254"/>
        <end position="258"/>
    </location>
</feature>
<feature type="active site" evidence="1">
    <location>
        <position position="114"/>
    </location>
</feature>
<feature type="active site" evidence="1">
    <location>
        <position position="253"/>
    </location>
</feature>
<feature type="active site" evidence="1">
    <location>
        <position position="283"/>
    </location>
</feature>
<accession>Q18B40</accession>
<proteinExistence type="inferred from homology"/>
<comment type="function">
    <text evidence="1">Catalyzes the condensation reaction of fatty acid synthesis by the addition to an acyl acceptor of two carbons from malonyl-ACP. Catalyzes the first condensation reaction which initiates fatty acid synthesis and may therefore play a role in governing the total rate of fatty acid production. Possesses both acetoacetyl-ACP synthase and acetyl transacylase activities. Its substrate specificity determines the biosynthesis of branched-chain and/or straight-chain of fatty acids.</text>
</comment>
<comment type="catalytic activity">
    <reaction evidence="1">
        <text>malonyl-[ACP] + acetyl-CoA + H(+) = 3-oxobutanoyl-[ACP] + CO2 + CoA</text>
        <dbReference type="Rhea" id="RHEA:12080"/>
        <dbReference type="Rhea" id="RHEA-COMP:9623"/>
        <dbReference type="Rhea" id="RHEA-COMP:9625"/>
        <dbReference type="ChEBI" id="CHEBI:15378"/>
        <dbReference type="ChEBI" id="CHEBI:16526"/>
        <dbReference type="ChEBI" id="CHEBI:57287"/>
        <dbReference type="ChEBI" id="CHEBI:57288"/>
        <dbReference type="ChEBI" id="CHEBI:78449"/>
        <dbReference type="ChEBI" id="CHEBI:78450"/>
        <dbReference type="EC" id="2.3.1.180"/>
    </reaction>
</comment>
<comment type="pathway">
    <text evidence="1">Lipid metabolism; fatty acid biosynthesis.</text>
</comment>
<comment type="subunit">
    <text evidence="1">Homodimer.</text>
</comment>
<comment type="subcellular location">
    <subcellularLocation>
        <location evidence="1">Cytoplasm</location>
    </subcellularLocation>
</comment>
<comment type="domain">
    <text evidence="1">The last Arg residue of the ACP-binding site is essential for the weak association between ACP/AcpP and FabH.</text>
</comment>
<comment type="similarity">
    <text evidence="1">Belongs to the thiolase-like superfamily. FabH family.</text>
</comment>
<keyword id="KW-0012">Acyltransferase</keyword>
<keyword id="KW-0963">Cytoplasm</keyword>
<keyword id="KW-0275">Fatty acid biosynthesis</keyword>
<keyword id="KW-0276">Fatty acid metabolism</keyword>
<keyword id="KW-0444">Lipid biosynthesis</keyword>
<keyword id="KW-0443">Lipid metabolism</keyword>
<keyword id="KW-0511">Multifunctional enzyme</keyword>
<keyword id="KW-1185">Reference proteome</keyword>
<keyword id="KW-0808">Transferase</keyword>
<dbReference type="EC" id="2.3.1.180" evidence="1"/>
<dbReference type="EMBL" id="AM180355">
    <property type="protein sequence ID" value="CAJ68033.1"/>
    <property type="molecule type" value="Genomic_DNA"/>
</dbReference>
<dbReference type="RefSeq" id="WP_003438099.1">
    <property type="nucleotide sequence ID" value="NZ_JAUPES010000024.1"/>
</dbReference>
<dbReference type="RefSeq" id="YP_001087672.1">
    <property type="nucleotide sequence ID" value="NC_009089.1"/>
</dbReference>
<dbReference type="SMR" id="Q18B40"/>
<dbReference type="STRING" id="272563.CD630_11790"/>
<dbReference type="EnsemblBacteria" id="CAJ68033">
    <property type="protein sequence ID" value="CAJ68033"/>
    <property type="gene ID" value="CD630_11790"/>
</dbReference>
<dbReference type="KEGG" id="cdf:CD630_11790"/>
<dbReference type="KEGG" id="pdc:CDIF630_01328"/>
<dbReference type="PATRIC" id="fig|272563.120.peg.1230"/>
<dbReference type="eggNOG" id="COG0332">
    <property type="taxonomic scope" value="Bacteria"/>
</dbReference>
<dbReference type="OrthoDB" id="9815506at2"/>
<dbReference type="PhylomeDB" id="Q18B40"/>
<dbReference type="BioCyc" id="PDIF272563:G12WB-1310-MONOMER"/>
<dbReference type="UniPathway" id="UPA00094"/>
<dbReference type="Proteomes" id="UP000001978">
    <property type="component" value="Chromosome"/>
</dbReference>
<dbReference type="GO" id="GO:0005737">
    <property type="term" value="C:cytoplasm"/>
    <property type="evidence" value="ECO:0007669"/>
    <property type="project" value="UniProtKB-SubCell"/>
</dbReference>
<dbReference type="GO" id="GO:0004315">
    <property type="term" value="F:3-oxoacyl-[acyl-carrier-protein] synthase activity"/>
    <property type="evidence" value="ECO:0007669"/>
    <property type="project" value="InterPro"/>
</dbReference>
<dbReference type="GO" id="GO:0033818">
    <property type="term" value="F:beta-ketoacyl-acyl-carrier-protein synthase III activity"/>
    <property type="evidence" value="ECO:0007669"/>
    <property type="project" value="UniProtKB-UniRule"/>
</dbReference>
<dbReference type="GO" id="GO:0006633">
    <property type="term" value="P:fatty acid biosynthetic process"/>
    <property type="evidence" value="ECO:0007669"/>
    <property type="project" value="UniProtKB-UniRule"/>
</dbReference>
<dbReference type="CDD" id="cd00830">
    <property type="entry name" value="KAS_III"/>
    <property type="match status" value="1"/>
</dbReference>
<dbReference type="FunFam" id="3.40.47.10:FF:000004">
    <property type="entry name" value="3-oxoacyl-[acyl-carrier-protein] synthase 3"/>
    <property type="match status" value="1"/>
</dbReference>
<dbReference type="Gene3D" id="3.40.47.10">
    <property type="match status" value="1"/>
</dbReference>
<dbReference type="HAMAP" id="MF_01815">
    <property type="entry name" value="FabH"/>
    <property type="match status" value="1"/>
</dbReference>
<dbReference type="InterPro" id="IPR013747">
    <property type="entry name" value="ACP_syn_III_C"/>
</dbReference>
<dbReference type="InterPro" id="IPR013751">
    <property type="entry name" value="ACP_syn_III_N"/>
</dbReference>
<dbReference type="InterPro" id="IPR004655">
    <property type="entry name" value="FabH"/>
</dbReference>
<dbReference type="InterPro" id="IPR016039">
    <property type="entry name" value="Thiolase-like"/>
</dbReference>
<dbReference type="NCBIfam" id="TIGR00747">
    <property type="entry name" value="fabH"/>
    <property type="match status" value="1"/>
</dbReference>
<dbReference type="NCBIfam" id="NF006829">
    <property type="entry name" value="PRK09352.1"/>
    <property type="match status" value="1"/>
</dbReference>
<dbReference type="PANTHER" id="PTHR43091">
    <property type="entry name" value="3-OXOACYL-[ACYL-CARRIER-PROTEIN] SYNTHASE"/>
    <property type="match status" value="1"/>
</dbReference>
<dbReference type="PANTHER" id="PTHR43091:SF1">
    <property type="entry name" value="BETA-KETOACYL-[ACYL-CARRIER-PROTEIN] SYNTHASE III, CHLOROPLASTIC"/>
    <property type="match status" value="1"/>
</dbReference>
<dbReference type="Pfam" id="PF08545">
    <property type="entry name" value="ACP_syn_III"/>
    <property type="match status" value="1"/>
</dbReference>
<dbReference type="Pfam" id="PF08541">
    <property type="entry name" value="ACP_syn_III_C"/>
    <property type="match status" value="1"/>
</dbReference>
<dbReference type="SUPFAM" id="SSF53901">
    <property type="entry name" value="Thiolase-like"/>
    <property type="match status" value="1"/>
</dbReference>
<reference key="1">
    <citation type="journal article" date="2006" name="Nat. Genet.">
        <title>The multidrug-resistant human pathogen Clostridium difficile has a highly mobile, mosaic genome.</title>
        <authorList>
            <person name="Sebaihia M."/>
            <person name="Wren B.W."/>
            <person name="Mullany P."/>
            <person name="Fairweather N.F."/>
            <person name="Minton N."/>
            <person name="Stabler R."/>
            <person name="Thomson N.R."/>
            <person name="Roberts A.P."/>
            <person name="Cerdeno-Tarraga A.M."/>
            <person name="Wang H."/>
            <person name="Holden M.T.G."/>
            <person name="Wright A."/>
            <person name="Churcher C."/>
            <person name="Quail M.A."/>
            <person name="Baker S."/>
            <person name="Bason N."/>
            <person name="Brooks K."/>
            <person name="Chillingworth T."/>
            <person name="Cronin A."/>
            <person name="Davis P."/>
            <person name="Dowd L."/>
            <person name="Fraser A."/>
            <person name="Feltwell T."/>
            <person name="Hance Z."/>
            <person name="Holroyd S."/>
            <person name="Jagels K."/>
            <person name="Moule S."/>
            <person name="Mungall K."/>
            <person name="Price C."/>
            <person name="Rabbinowitsch E."/>
            <person name="Sharp S."/>
            <person name="Simmonds M."/>
            <person name="Stevens K."/>
            <person name="Unwin L."/>
            <person name="Whithead S."/>
            <person name="Dupuy B."/>
            <person name="Dougan G."/>
            <person name="Barrell B."/>
            <person name="Parkhill J."/>
        </authorList>
    </citation>
    <scope>NUCLEOTIDE SEQUENCE [LARGE SCALE GENOMIC DNA]</scope>
    <source>
        <strain>630</strain>
    </source>
</reference>
<gene>
    <name evidence="1" type="primary">fabH</name>
    <name type="ordered locus">CD630_11790</name>
</gene>
<organism>
    <name type="scientific">Clostridioides difficile (strain 630)</name>
    <name type="common">Peptoclostridium difficile</name>
    <dbReference type="NCBI Taxonomy" id="272563"/>
    <lineage>
        <taxon>Bacteria</taxon>
        <taxon>Bacillati</taxon>
        <taxon>Bacillota</taxon>
        <taxon>Clostridia</taxon>
        <taxon>Peptostreptococcales</taxon>
        <taxon>Peptostreptococcaceae</taxon>
        <taxon>Clostridioides</taxon>
    </lineage>
</organism>
<name>FABH_CLOD6</name>
<protein>
    <recommendedName>
        <fullName evidence="1">Beta-ketoacyl-[acyl-carrier-protein] synthase III</fullName>
        <shortName evidence="1">Beta-ketoacyl-ACP synthase III</shortName>
        <shortName evidence="1">KAS III</shortName>
        <ecNumber evidence="1">2.3.1.180</ecNumber>
    </recommendedName>
    <alternativeName>
        <fullName evidence="1">3-oxoacyl-[acyl-carrier-protein] synthase 3</fullName>
    </alternativeName>
    <alternativeName>
        <fullName evidence="1">3-oxoacyl-[acyl-carrier-protein] synthase III</fullName>
    </alternativeName>
</protein>
<sequence length="328" mass="35112">MNTKAGILGVGSYLPEQSYDNFHFEKIMDTSDEWISTRTGIKERRFAKESEATSDLASKAALKAIECAKLNVEDIELIILATITPDMSLPSTACIVQDAIGAVNATAFDISAACSGFVYGVTIAKQFVETGCYKNVLVIGAETCSKFLNYDDRTTAVLFGDGAGAAVIGPVNEGGILSTHMGSDGKGKDCLKVPAGGSRLKASKETVEANLHTIEMAGSDVFKFAVRKMAETSLRALEKANLNTTDIDYLVPHQANIRIIQASSKRLELDMKKVYVNIDKYGNMSAASIPVALDEAYREGKIKKGDNVVLVGFGGGLTWGASVVKWTL</sequence>
<evidence type="ECO:0000255" key="1">
    <source>
        <dbReference type="HAMAP-Rule" id="MF_01815"/>
    </source>
</evidence>